<protein>
    <recommendedName>
        <fullName evidence="4">Potassium channel toxin alpha-KTx 9.8</fullName>
    </recommendedName>
    <alternativeName>
        <fullName evidence="6">Toxin Tx784</fullName>
    </alternativeName>
</protein>
<reference key="1">
    <citation type="submission" date="2008-10" db="EMBL/GenBank/DDBJ databases">
        <title>Buthus occitanus israelis scorpion toxin.</title>
        <authorList>
            <person name="Zilberberg N."/>
            <person name="Kozminsky-Atias A."/>
        </authorList>
    </citation>
    <scope>NUCLEOTIDE SEQUENCE [MRNA]</scope>
    <source>
        <tissue>Venom gland</tissue>
    </source>
</reference>
<organism>
    <name type="scientific">Buthus israelis</name>
    <name type="common">Israeli scorpion</name>
    <name type="synonym">Buthus occitanus israelis</name>
    <dbReference type="NCBI Taxonomy" id="2899555"/>
    <lineage>
        <taxon>Eukaryota</taxon>
        <taxon>Metazoa</taxon>
        <taxon>Ecdysozoa</taxon>
        <taxon>Arthropoda</taxon>
        <taxon>Chelicerata</taxon>
        <taxon>Arachnida</taxon>
        <taxon>Scorpiones</taxon>
        <taxon>Buthida</taxon>
        <taxon>Buthoidea</taxon>
        <taxon>Buthidae</taxon>
        <taxon>Buthus</taxon>
    </lineage>
</organism>
<name>KAX98_BUTIS</name>
<sequence length="56" mass="6032">MSRLFTLVLIVLAMNVMMAIISDPVVEAVGCEECPMHCKGKMAKPTCDDGVCNCNV</sequence>
<accession>B8XH46</accession>
<evidence type="ECO:0000250" key="1"/>
<evidence type="ECO:0000250" key="2">
    <source>
        <dbReference type="UniProtKB" id="Q9NJP7"/>
    </source>
</evidence>
<evidence type="ECO:0000255" key="3"/>
<evidence type="ECO:0000305" key="4"/>
<evidence type="ECO:0000305" key="5">
    <source ref="1"/>
</evidence>
<evidence type="ECO:0000312" key="6">
    <source>
        <dbReference type="EMBL" id="ACJ23155.1"/>
    </source>
</evidence>
<feature type="signal peptide" evidence="3">
    <location>
        <begin position="1"/>
        <end position="19"/>
    </location>
</feature>
<feature type="propeptide" id="PRO_0000428961" evidence="1">
    <location>
        <begin position="20"/>
        <end position="28"/>
    </location>
</feature>
<feature type="peptide" id="PRO_0000428962" description="Potassium channel toxin alpha-KTx 9.8" evidence="5">
    <location>
        <begin position="29"/>
        <end position="56"/>
    </location>
</feature>
<feature type="disulfide bond" evidence="2">
    <location>
        <begin position="31"/>
        <end position="47"/>
    </location>
</feature>
<feature type="disulfide bond" evidence="2">
    <location>
        <begin position="34"/>
        <end position="52"/>
    </location>
</feature>
<feature type="disulfide bond" evidence="2">
    <location>
        <begin position="38"/>
        <end position="54"/>
    </location>
</feature>
<comment type="function">
    <text evidence="1">Potassium channel inhibitor.</text>
</comment>
<comment type="subcellular location">
    <subcellularLocation>
        <location evidence="5">Secreted</location>
    </subcellularLocation>
</comment>
<comment type="tissue specificity">
    <text evidence="5">Expressed by the venom gland.</text>
</comment>
<comment type="domain">
    <text evidence="2">Has the structural arrangement of an alpha-helix connected to a beta-sheet by disulfide bonds (CSalpha/beta).</text>
</comment>
<comment type="similarity">
    <text evidence="4">Belongs to the short scorpion toxin superfamily. Potassium channel inhibitor family. Alpha-KTx 09 subfamily.</text>
</comment>
<dbReference type="EMBL" id="FJ360835">
    <property type="protein sequence ID" value="ACJ23155.1"/>
    <property type="molecule type" value="mRNA"/>
</dbReference>
<dbReference type="GO" id="GO:0005576">
    <property type="term" value="C:extracellular region"/>
    <property type="evidence" value="ECO:0007669"/>
    <property type="project" value="UniProtKB-SubCell"/>
</dbReference>
<dbReference type="GO" id="GO:0008200">
    <property type="term" value="F:ion channel inhibitor activity"/>
    <property type="evidence" value="ECO:0007669"/>
    <property type="project" value="InterPro"/>
</dbReference>
<dbReference type="GO" id="GO:0015459">
    <property type="term" value="F:potassium channel regulator activity"/>
    <property type="evidence" value="ECO:0007669"/>
    <property type="project" value="UniProtKB-KW"/>
</dbReference>
<dbReference type="GO" id="GO:0090729">
    <property type="term" value="F:toxin activity"/>
    <property type="evidence" value="ECO:0007669"/>
    <property type="project" value="UniProtKB-KW"/>
</dbReference>
<dbReference type="InterPro" id="IPR036574">
    <property type="entry name" value="Scorpion_toxin-like_sf"/>
</dbReference>
<dbReference type="InterPro" id="IPR008911">
    <property type="entry name" value="Toxin_alpha-KTx_8/9"/>
</dbReference>
<dbReference type="Pfam" id="PF05453">
    <property type="entry name" value="Toxin_6"/>
    <property type="match status" value="1"/>
</dbReference>
<dbReference type="SUPFAM" id="SSF57095">
    <property type="entry name" value="Scorpion toxin-like"/>
    <property type="match status" value="1"/>
</dbReference>
<proteinExistence type="inferred from homology"/>
<keyword id="KW-1015">Disulfide bond</keyword>
<keyword id="KW-0872">Ion channel impairing toxin</keyword>
<keyword id="KW-0528">Neurotoxin</keyword>
<keyword id="KW-0632">Potassium channel impairing toxin</keyword>
<keyword id="KW-0964">Secreted</keyword>
<keyword id="KW-0732">Signal</keyword>
<keyword id="KW-0800">Toxin</keyword>